<proteinExistence type="inferred from homology"/>
<reference key="1">
    <citation type="journal article" date="2002" name="Nature">
        <title>Sequence and analysis of chromosome 2 of Dictyostelium discoideum.</title>
        <authorList>
            <person name="Gloeckner G."/>
            <person name="Eichinger L."/>
            <person name="Szafranski K."/>
            <person name="Pachebat J.A."/>
            <person name="Bankier A.T."/>
            <person name="Dear P.H."/>
            <person name="Lehmann R."/>
            <person name="Baumgart C."/>
            <person name="Parra G."/>
            <person name="Abril J.F."/>
            <person name="Guigo R."/>
            <person name="Kumpf K."/>
            <person name="Tunggal B."/>
            <person name="Cox E.C."/>
            <person name="Quail M.A."/>
            <person name="Platzer M."/>
            <person name="Rosenthal A."/>
            <person name="Noegel A.A."/>
        </authorList>
    </citation>
    <scope>NUCLEOTIDE SEQUENCE [LARGE SCALE GENOMIC DNA]</scope>
    <source>
        <strain>AX4</strain>
    </source>
</reference>
<reference key="2">
    <citation type="journal article" date="2005" name="Nature">
        <title>The genome of the social amoeba Dictyostelium discoideum.</title>
        <authorList>
            <person name="Eichinger L."/>
            <person name="Pachebat J.A."/>
            <person name="Gloeckner G."/>
            <person name="Rajandream M.A."/>
            <person name="Sucgang R."/>
            <person name="Berriman M."/>
            <person name="Song J."/>
            <person name="Olsen R."/>
            <person name="Szafranski K."/>
            <person name="Xu Q."/>
            <person name="Tunggal B."/>
            <person name="Kummerfeld S."/>
            <person name="Madera M."/>
            <person name="Konfortov B.A."/>
            <person name="Rivero F."/>
            <person name="Bankier A.T."/>
            <person name="Lehmann R."/>
            <person name="Hamlin N."/>
            <person name="Davies R."/>
            <person name="Gaudet P."/>
            <person name="Fey P."/>
            <person name="Pilcher K."/>
            <person name="Chen G."/>
            <person name="Saunders D."/>
            <person name="Sodergren E.J."/>
            <person name="Davis P."/>
            <person name="Kerhornou A."/>
            <person name="Nie X."/>
            <person name="Hall N."/>
            <person name="Anjard C."/>
            <person name="Hemphill L."/>
            <person name="Bason N."/>
            <person name="Farbrother P."/>
            <person name="Desany B."/>
            <person name="Just E."/>
            <person name="Morio T."/>
            <person name="Rost R."/>
            <person name="Churcher C.M."/>
            <person name="Cooper J."/>
            <person name="Haydock S."/>
            <person name="van Driessche N."/>
            <person name="Cronin A."/>
            <person name="Goodhead I."/>
            <person name="Muzny D.M."/>
            <person name="Mourier T."/>
            <person name="Pain A."/>
            <person name="Lu M."/>
            <person name="Harper D."/>
            <person name="Lindsay R."/>
            <person name="Hauser H."/>
            <person name="James K.D."/>
            <person name="Quiles M."/>
            <person name="Madan Babu M."/>
            <person name="Saito T."/>
            <person name="Buchrieser C."/>
            <person name="Wardroper A."/>
            <person name="Felder M."/>
            <person name="Thangavelu M."/>
            <person name="Johnson D."/>
            <person name="Knights A."/>
            <person name="Loulseged H."/>
            <person name="Mungall K.L."/>
            <person name="Oliver K."/>
            <person name="Price C."/>
            <person name="Quail M.A."/>
            <person name="Urushihara H."/>
            <person name="Hernandez J."/>
            <person name="Rabbinowitsch E."/>
            <person name="Steffen D."/>
            <person name="Sanders M."/>
            <person name="Ma J."/>
            <person name="Kohara Y."/>
            <person name="Sharp S."/>
            <person name="Simmonds M.N."/>
            <person name="Spiegler S."/>
            <person name="Tivey A."/>
            <person name="Sugano S."/>
            <person name="White B."/>
            <person name="Walker D."/>
            <person name="Woodward J.R."/>
            <person name="Winckler T."/>
            <person name="Tanaka Y."/>
            <person name="Shaulsky G."/>
            <person name="Schleicher M."/>
            <person name="Weinstock G.M."/>
            <person name="Rosenthal A."/>
            <person name="Cox E.C."/>
            <person name="Chisholm R.L."/>
            <person name="Gibbs R.A."/>
            <person name="Loomis W.F."/>
            <person name="Platzer M."/>
            <person name="Kay R.R."/>
            <person name="Williams J.G."/>
            <person name="Dear P.H."/>
            <person name="Noegel A.A."/>
            <person name="Barrell B.G."/>
            <person name="Kuspa A."/>
        </authorList>
    </citation>
    <scope>NUCLEOTIDE SEQUENCE [LARGE SCALE GENOMIC DNA]</scope>
    <source>
        <strain>AX4</strain>
    </source>
</reference>
<gene>
    <name type="primary">cln5</name>
    <name type="ORF">DDB_G0275299</name>
</gene>
<sequence length="322" mass="37282">MKRTIIILLFVSLFVTFVLSQIPDNDPELCQQRIQREDCPQTPVPWGTFNDNDEIEVYYMQAPVFEAVFGNFFGKLGGYHSAIGFYDLTTGLNYTAEYDAFFEVGNGTLPNIINVDGKDELLWCNAGILCTVPYINETYWDKNIYSTASKTYMGTINGTQLNQYIEWMQQYNISNPVYQTWDVWNNYGQDLFVPSTTCDDFTQQSIEHLGSIGINYNCSTVFKRDYINLFTEKPQPIDFTEHYDDIFKFYEAVLEIKEGSIAQIIERILSIIGLKKYIYVQGEYYLLELNYPFMNAKYDYITLPGCPANGIDYENGNFIHLN</sequence>
<dbReference type="EMBL" id="AAFI02000013">
    <property type="protein sequence ID" value="EAL69930.1"/>
    <property type="molecule type" value="Genomic_DNA"/>
</dbReference>
<dbReference type="RefSeq" id="XP_643842.1">
    <property type="nucleotide sequence ID" value="XM_638750.1"/>
</dbReference>
<dbReference type="SMR" id="Q553W9"/>
<dbReference type="FunCoup" id="Q553W9">
    <property type="interactions" value="4"/>
</dbReference>
<dbReference type="STRING" id="44689.Q553W9"/>
<dbReference type="GlyCosmos" id="Q553W9">
    <property type="glycosylation" value="6 sites, No reported glycans"/>
</dbReference>
<dbReference type="GlyGen" id="Q553W9">
    <property type="glycosylation" value="6 sites"/>
</dbReference>
<dbReference type="PaxDb" id="44689-DDB0234077"/>
<dbReference type="EnsemblProtists" id="EAL69930">
    <property type="protein sequence ID" value="EAL69930"/>
    <property type="gene ID" value="DDB_G0275299"/>
</dbReference>
<dbReference type="GeneID" id="8619889"/>
<dbReference type="KEGG" id="ddi:DDB_G0275299"/>
<dbReference type="dictyBase" id="DDB_G0275299">
    <property type="gene designation" value="cln5"/>
</dbReference>
<dbReference type="VEuPathDB" id="AmoebaDB:DDB_G0275299"/>
<dbReference type="eggNOG" id="ENOG502QPQ5">
    <property type="taxonomic scope" value="Eukaryota"/>
</dbReference>
<dbReference type="HOGENOM" id="CLU_050387_0_0_1"/>
<dbReference type="InParanoid" id="Q553W9"/>
<dbReference type="OMA" id="FRPHQSF"/>
<dbReference type="PhylomeDB" id="Q553W9"/>
<dbReference type="PRO" id="PR:Q553W9"/>
<dbReference type="Proteomes" id="UP000002195">
    <property type="component" value="Chromosome 2"/>
</dbReference>
<dbReference type="GO" id="GO:0005938">
    <property type="term" value="C:cell cortex"/>
    <property type="evidence" value="ECO:0000314"/>
    <property type="project" value="dictyBase"/>
</dbReference>
<dbReference type="GO" id="GO:0000331">
    <property type="term" value="C:contractile vacuole"/>
    <property type="evidence" value="ECO:0000304"/>
    <property type="project" value="dictyBase"/>
</dbReference>
<dbReference type="GO" id="GO:0005783">
    <property type="term" value="C:endoplasmic reticulum"/>
    <property type="evidence" value="ECO:0000314"/>
    <property type="project" value="dictyBase"/>
</dbReference>
<dbReference type="GO" id="GO:0005576">
    <property type="term" value="C:extracellular region"/>
    <property type="evidence" value="ECO:0000314"/>
    <property type="project" value="dictyBase"/>
</dbReference>
<dbReference type="GO" id="GO:0005765">
    <property type="term" value="C:lysosomal membrane"/>
    <property type="evidence" value="ECO:0000318"/>
    <property type="project" value="GO_Central"/>
</dbReference>
<dbReference type="GO" id="GO:0048471">
    <property type="term" value="C:perinuclear region of cytoplasm"/>
    <property type="evidence" value="ECO:0000314"/>
    <property type="project" value="dictyBase"/>
</dbReference>
<dbReference type="GO" id="GO:0016798">
    <property type="term" value="F:hydrolase activity, acting on glycosyl bonds"/>
    <property type="evidence" value="ECO:0000314"/>
    <property type="project" value="dictyBase"/>
</dbReference>
<dbReference type="GO" id="GO:0006914">
    <property type="term" value="P:autophagy"/>
    <property type="evidence" value="ECO:0000315"/>
    <property type="project" value="dictyBase"/>
</dbReference>
<dbReference type="GO" id="GO:0007155">
    <property type="term" value="P:cell adhesion"/>
    <property type="evidence" value="ECO:0000315"/>
    <property type="project" value="dictyBase"/>
</dbReference>
<dbReference type="GO" id="GO:0043327">
    <property type="term" value="P:chemotaxis to cAMP"/>
    <property type="evidence" value="ECO:0000315"/>
    <property type="project" value="dictyBase"/>
</dbReference>
<dbReference type="GO" id="GO:0006887">
    <property type="term" value="P:exocytosis"/>
    <property type="evidence" value="ECO:0000314"/>
    <property type="project" value="dictyBase"/>
</dbReference>
<dbReference type="GO" id="GO:0007040">
    <property type="term" value="P:lysosome organization"/>
    <property type="evidence" value="ECO:0000318"/>
    <property type="project" value="GO_Central"/>
</dbReference>
<dbReference type="GO" id="GO:0010498">
    <property type="term" value="P:proteasomal protein catabolic process"/>
    <property type="evidence" value="ECO:0000315"/>
    <property type="project" value="dictyBase"/>
</dbReference>
<dbReference type="GO" id="GO:0009306">
    <property type="term" value="P:protein secretion"/>
    <property type="evidence" value="ECO:0000315"/>
    <property type="project" value="dictyBase"/>
</dbReference>
<dbReference type="GO" id="GO:0010468">
    <property type="term" value="P:regulation of gene expression"/>
    <property type="evidence" value="ECO:0000315"/>
    <property type="project" value="dictyBase"/>
</dbReference>
<dbReference type="GO" id="GO:0030587">
    <property type="term" value="P:sorocarp development"/>
    <property type="evidence" value="ECO:0000315"/>
    <property type="project" value="dictyBase"/>
</dbReference>
<dbReference type="InterPro" id="IPR026138">
    <property type="entry name" value="CLN5"/>
</dbReference>
<dbReference type="PANTHER" id="PTHR15380:SF2">
    <property type="entry name" value="CEROID-LIPOFUSCINOSIS NEURONAL PROTEIN 5"/>
    <property type="match status" value="1"/>
</dbReference>
<dbReference type="PANTHER" id="PTHR15380">
    <property type="entry name" value="CEROID-LIPOFUSCINOSIS, NEURONAL 5"/>
    <property type="match status" value="1"/>
</dbReference>
<dbReference type="Pfam" id="PF15014">
    <property type="entry name" value="CLN5"/>
    <property type="match status" value="1"/>
</dbReference>
<organism>
    <name type="scientific">Dictyostelium discoideum</name>
    <name type="common">Social amoeba</name>
    <dbReference type="NCBI Taxonomy" id="44689"/>
    <lineage>
        <taxon>Eukaryota</taxon>
        <taxon>Amoebozoa</taxon>
        <taxon>Evosea</taxon>
        <taxon>Eumycetozoa</taxon>
        <taxon>Dictyostelia</taxon>
        <taxon>Dictyosteliales</taxon>
        <taxon>Dictyosteliaceae</taxon>
        <taxon>Dictyostelium</taxon>
    </lineage>
</organism>
<keyword id="KW-0325">Glycoprotein</keyword>
<keyword id="KW-1185">Reference proteome</keyword>
<keyword id="KW-0732">Signal</keyword>
<name>CLN5_DICDI</name>
<protein>
    <recommendedName>
        <fullName>Ceroid-lipofuscinosis neuronal protein 5 homolog</fullName>
        <shortName>Protein CLN5</shortName>
    </recommendedName>
</protein>
<accession>Q553W9</accession>
<accession>Q86I57</accession>
<accession>Q86I58</accession>
<comment type="similarity">
    <text evidence="2">Belongs to the CLN5 family.</text>
</comment>
<evidence type="ECO:0000255" key="1"/>
<evidence type="ECO:0000305" key="2"/>
<feature type="signal peptide" evidence="1">
    <location>
        <begin position="1"/>
        <end position="20"/>
    </location>
</feature>
<feature type="chain" id="PRO_0000330473" description="Ceroid-lipofuscinosis neuronal protein 5 homolog">
    <location>
        <begin position="21"/>
        <end position="322"/>
    </location>
</feature>
<feature type="glycosylation site" description="N-linked (GlcNAc...) asparagine" evidence="1">
    <location>
        <position position="93"/>
    </location>
</feature>
<feature type="glycosylation site" description="N-linked (GlcNAc...) asparagine" evidence="1">
    <location>
        <position position="106"/>
    </location>
</feature>
<feature type="glycosylation site" description="N-linked (GlcNAc...) asparagine" evidence="1">
    <location>
        <position position="136"/>
    </location>
</feature>
<feature type="glycosylation site" description="N-linked (GlcNAc...) asparagine" evidence="1">
    <location>
        <position position="157"/>
    </location>
</feature>
<feature type="glycosylation site" description="N-linked (GlcNAc...) asparagine" evidence="1">
    <location>
        <position position="172"/>
    </location>
</feature>
<feature type="glycosylation site" description="N-linked (GlcNAc...) asparagine" evidence="1">
    <location>
        <position position="217"/>
    </location>
</feature>